<name>ZITR_LACLM</name>
<sequence>MSLANQIDQFLGAIMQFAENKHEILLGECESNVKLTSTQEHILMILAAEVSTNARIAEQLKISPAAVTKALKKLQEQELIKSSRATNDERVVLWSLTEKAIPVAKEHAAHHEKTLSTYQELGDKFTDEEQKVISQFLSVLTEEFR</sequence>
<proteinExistence type="evidence at protein level"/>
<protein>
    <recommendedName>
        <fullName>Transcriptional regulator ZitR</fullName>
    </recommendedName>
</protein>
<feature type="chain" id="PRO_0000425608" description="Transcriptional regulator ZitR">
    <location>
        <begin position="1"/>
        <end position="145"/>
    </location>
</feature>
<feature type="domain" description="HTH marR-type" evidence="2">
    <location>
        <begin position="1"/>
        <end position="142"/>
    </location>
</feature>
<feature type="DNA-binding region" description="H-T-H motif" evidence="2">
    <location>
        <begin position="53"/>
        <end position="76"/>
    </location>
</feature>
<feature type="binding site" evidence="1">
    <location>
        <position position="23"/>
    </location>
    <ligand>
        <name>Zn(2+)</name>
        <dbReference type="ChEBI" id="CHEBI:29105"/>
        <label>1</label>
    </ligand>
</feature>
<feature type="binding site" evidence="1">
    <location>
        <position position="29"/>
    </location>
    <ligand>
        <name>Zn(2+)</name>
        <dbReference type="ChEBI" id="CHEBI:29105"/>
        <label>2</label>
    </ligand>
</feature>
<feature type="binding site" evidence="1">
    <location>
        <position position="40"/>
    </location>
    <ligand>
        <name>Zn(2+)</name>
        <dbReference type="ChEBI" id="CHEBI:29105"/>
        <label>2</label>
    </ligand>
</feature>
<feature type="binding site" evidence="1">
    <location>
        <position position="41"/>
    </location>
    <ligand>
        <name>Zn(2+)</name>
        <dbReference type="ChEBI" id="CHEBI:29105"/>
        <label>1</label>
    </ligand>
</feature>
<feature type="binding site" evidence="1">
    <location>
        <position position="106"/>
    </location>
    <ligand>
        <name>Zn(2+)</name>
        <dbReference type="ChEBI" id="CHEBI:29105"/>
        <label>2</label>
    </ligand>
</feature>
<feature type="binding site" evidence="1">
    <location>
        <position position="107"/>
    </location>
    <ligand>
        <name>Zn(2+)</name>
        <dbReference type="ChEBI" id="CHEBI:29105"/>
        <label>1</label>
    </ligand>
</feature>
<feature type="binding site" evidence="1">
    <location>
        <position position="111"/>
    </location>
    <ligand>
        <name>Zn(2+)</name>
        <dbReference type="ChEBI" id="CHEBI:29105"/>
        <label>1</label>
    </ligand>
</feature>
<feature type="helix" evidence="4">
    <location>
        <begin position="3"/>
        <end position="17"/>
    </location>
</feature>
<feature type="helix" evidence="4">
    <location>
        <begin position="37"/>
        <end position="48"/>
    </location>
</feature>
<feature type="helix" evidence="4">
    <location>
        <begin position="53"/>
        <end position="60"/>
    </location>
</feature>
<feature type="helix" evidence="4">
    <location>
        <begin position="64"/>
        <end position="76"/>
    </location>
</feature>
<feature type="strand" evidence="4">
    <location>
        <begin position="80"/>
        <end position="83"/>
    </location>
</feature>
<feature type="strand" evidence="4">
    <location>
        <begin position="93"/>
        <end position="96"/>
    </location>
</feature>
<feature type="turn" evidence="4">
    <location>
        <begin position="98"/>
        <end position="100"/>
    </location>
</feature>
<feature type="helix" evidence="4">
    <location>
        <begin position="101"/>
        <end position="123"/>
    </location>
</feature>
<feature type="helix" evidence="4">
    <location>
        <begin position="127"/>
        <end position="141"/>
    </location>
</feature>
<feature type="helix" evidence="4">
    <location>
        <begin position="142"/>
        <end position="144"/>
    </location>
</feature>
<evidence type="ECO:0000250" key="1"/>
<evidence type="ECO:0000255" key="2">
    <source>
        <dbReference type="PROSITE-ProRule" id="PRU00345"/>
    </source>
</evidence>
<evidence type="ECO:0000269" key="3">
    <source>
    </source>
</evidence>
<evidence type="ECO:0007829" key="4">
    <source>
        <dbReference type="PDB" id="6FI9"/>
    </source>
</evidence>
<accession>A2RNS2</accession>
<comment type="function">
    <text evidence="3">Zinc-responsive regulator that represses expression of the zit operon in the presence of zinc. Acts by binding two palindromic operator sites overlapping the -35 and -10 boxes of the zit promoter. Could be a sensitive sensor of intracellular zinc to efficiently respond to zinc variations in the environment.</text>
</comment>
<comment type="activity regulation">
    <text evidence="3">Zinc acts as a corepressor and is required for DNA-binding activity. Binds up to two zinc ligands per monomer. Inactive under zinc deprivation.</text>
</comment>
<comment type="subunit">
    <text evidence="3">Homodimer.</text>
</comment>
<organism>
    <name type="scientific">Lactococcus lactis subsp. cremoris (strain MG1363)</name>
    <dbReference type="NCBI Taxonomy" id="416870"/>
    <lineage>
        <taxon>Bacteria</taxon>
        <taxon>Bacillati</taxon>
        <taxon>Bacillota</taxon>
        <taxon>Bacilli</taxon>
        <taxon>Lactobacillales</taxon>
        <taxon>Streptococcaceae</taxon>
        <taxon>Lactococcus</taxon>
        <taxon>Lactococcus cremoris subsp. cremoris</taxon>
    </lineage>
</organism>
<reference key="1">
    <citation type="journal article" date="2007" name="J. Bacteriol.">
        <title>The complete genome sequence of the lactic acid bacterial paradigm Lactococcus lactis subsp. cremoris MG1363.</title>
        <authorList>
            <person name="Wegmann U."/>
            <person name="O'Connell-Motherway M."/>
            <person name="Zomer A."/>
            <person name="Buist G."/>
            <person name="Shearman C."/>
            <person name="Canchaya C."/>
            <person name="Ventura M."/>
            <person name="Goesmann A."/>
            <person name="Gasson M.J."/>
            <person name="Kuipers O.P."/>
            <person name="van Sinderen D."/>
            <person name="Kok J."/>
        </authorList>
    </citation>
    <scope>NUCLEOTIDE SEQUENCE [LARGE SCALE GENOMIC DNA]</scope>
    <source>
        <strain>MG1363</strain>
    </source>
</reference>
<reference key="2">
    <citation type="journal article" date="2011" name="J. Bacteriol.">
        <title>Lactococcus lactis ZitR is a zinc-responsive repressor active in the presence of low, nontoxic zinc concentrations in vivo.</title>
        <authorList>
            <person name="Llull D."/>
            <person name="Son O."/>
            <person name="Blanie S."/>
            <person name="Briffotaux J."/>
            <person name="Morello E."/>
            <person name="Rogniaux H."/>
            <person name="Danot O."/>
            <person name="Poquet I."/>
        </authorList>
    </citation>
    <scope>FUNCTION</scope>
    <scope>DNA-BINDING</scope>
    <scope>ACTIVITY REGULATION</scope>
    <scope>SUBUNIT</scope>
    <source>
        <strain>MG1363</strain>
    </source>
</reference>
<gene>
    <name type="primary">zitR</name>
    <name type="ordered locus">llmg_2401</name>
</gene>
<dbReference type="EMBL" id="AM406671">
    <property type="protein sequence ID" value="CAL98965.1"/>
    <property type="molecule type" value="Genomic_DNA"/>
</dbReference>
<dbReference type="RefSeq" id="WP_011836041.1">
    <property type="nucleotide sequence ID" value="NC_009004.1"/>
</dbReference>
<dbReference type="PDB" id="6FI9">
    <property type="method" value="X-ray"/>
    <property type="resolution" value="2.80 A"/>
    <property type="chains" value="A/B/C/D/E/F/G/H=2-145"/>
</dbReference>
<dbReference type="PDBsum" id="6FI9"/>
<dbReference type="SMR" id="A2RNS2"/>
<dbReference type="STRING" id="416870.llmg_2401"/>
<dbReference type="GeneID" id="61110444"/>
<dbReference type="KEGG" id="llm:llmg_2401"/>
<dbReference type="eggNOG" id="COG1846">
    <property type="taxonomic scope" value="Bacteria"/>
</dbReference>
<dbReference type="HOGENOM" id="CLU_142321_1_0_9"/>
<dbReference type="OrthoDB" id="2319602at2"/>
<dbReference type="PhylomeDB" id="A2RNS2"/>
<dbReference type="Proteomes" id="UP000000364">
    <property type="component" value="Chromosome"/>
</dbReference>
<dbReference type="GO" id="GO:0003677">
    <property type="term" value="F:DNA binding"/>
    <property type="evidence" value="ECO:0007669"/>
    <property type="project" value="UniProtKB-KW"/>
</dbReference>
<dbReference type="GO" id="GO:0003700">
    <property type="term" value="F:DNA-binding transcription factor activity"/>
    <property type="evidence" value="ECO:0007669"/>
    <property type="project" value="InterPro"/>
</dbReference>
<dbReference type="GO" id="GO:0008270">
    <property type="term" value="F:zinc ion binding"/>
    <property type="evidence" value="ECO:0007669"/>
    <property type="project" value="InterPro"/>
</dbReference>
<dbReference type="CDD" id="cd00090">
    <property type="entry name" value="HTH_ARSR"/>
    <property type="match status" value="1"/>
</dbReference>
<dbReference type="Gene3D" id="6.10.140.1680">
    <property type="match status" value="1"/>
</dbReference>
<dbReference type="Gene3D" id="6.10.250.2360">
    <property type="match status" value="1"/>
</dbReference>
<dbReference type="Gene3D" id="1.10.10.10">
    <property type="entry name" value="Winged helix-like DNA-binding domain superfamily/Winged helix DNA-binding domain"/>
    <property type="match status" value="1"/>
</dbReference>
<dbReference type="InterPro" id="IPR047894">
    <property type="entry name" value="AdcR-like"/>
</dbReference>
<dbReference type="InterPro" id="IPR011991">
    <property type="entry name" value="ArsR-like_HTH"/>
</dbReference>
<dbReference type="InterPro" id="IPR000835">
    <property type="entry name" value="HTH_MarR-typ"/>
</dbReference>
<dbReference type="InterPro" id="IPR052067">
    <property type="entry name" value="Metal_resp_HTH_trans_reg"/>
</dbReference>
<dbReference type="InterPro" id="IPR055166">
    <property type="entry name" value="Transc_reg_Sar_Rot_HTH"/>
</dbReference>
<dbReference type="InterPro" id="IPR036388">
    <property type="entry name" value="WH-like_DNA-bd_sf"/>
</dbReference>
<dbReference type="InterPro" id="IPR036390">
    <property type="entry name" value="WH_DNA-bd_sf"/>
</dbReference>
<dbReference type="NCBIfam" id="NF038251">
    <property type="entry name" value="AdcR_fam_Zn_TF"/>
    <property type="match status" value="1"/>
</dbReference>
<dbReference type="PANTHER" id="PTHR35790">
    <property type="entry name" value="HTH-TYPE TRANSCRIPTIONAL REGULATOR PCHR"/>
    <property type="match status" value="1"/>
</dbReference>
<dbReference type="PANTHER" id="PTHR35790:SF4">
    <property type="entry name" value="HTH-TYPE TRANSCRIPTIONAL REGULATOR PCHR"/>
    <property type="match status" value="1"/>
</dbReference>
<dbReference type="Pfam" id="PF22381">
    <property type="entry name" value="Staph_reg_Sar_Rot"/>
    <property type="match status" value="1"/>
</dbReference>
<dbReference type="SMART" id="SM00347">
    <property type="entry name" value="HTH_MARR"/>
    <property type="match status" value="1"/>
</dbReference>
<dbReference type="SUPFAM" id="SSF46785">
    <property type="entry name" value="Winged helix' DNA-binding domain"/>
    <property type="match status" value="1"/>
</dbReference>
<dbReference type="PROSITE" id="PS50995">
    <property type="entry name" value="HTH_MARR_2"/>
    <property type="match status" value="1"/>
</dbReference>
<keyword id="KW-0002">3D-structure</keyword>
<keyword id="KW-0238">DNA-binding</keyword>
<keyword id="KW-0479">Metal-binding</keyword>
<keyword id="KW-0678">Repressor</keyword>
<keyword id="KW-0804">Transcription</keyword>
<keyword id="KW-0805">Transcription regulation</keyword>
<keyword id="KW-0862">Zinc</keyword>